<evidence type="ECO:0000255" key="1">
    <source>
        <dbReference type="HAMAP-Rule" id="MF_01030"/>
    </source>
</evidence>
<feature type="chain" id="PRO_1000072954" description="Probable D-serine dehydratase">
    <location>
        <begin position="1"/>
        <end position="441"/>
    </location>
</feature>
<feature type="modified residue" description="N6-(pyridoxal phosphate)lysine" evidence="1">
    <location>
        <position position="118"/>
    </location>
</feature>
<organism>
    <name type="scientific">Vibrio cholerae serotype O1 (strain ATCC 39541 / Classical Ogawa 395 / O395)</name>
    <dbReference type="NCBI Taxonomy" id="345073"/>
    <lineage>
        <taxon>Bacteria</taxon>
        <taxon>Pseudomonadati</taxon>
        <taxon>Pseudomonadota</taxon>
        <taxon>Gammaproteobacteria</taxon>
        <taxon>Vibrionales</taxon>
        <taxon>Vibrionaceae</taxon>
        <taxon>Vibrio</taxon>
    </lineage>
</organism>
<reference key="1">
    <citation type="submission" date="2007-03" db="EMBL/GenBank/DDBJ databases">
        <authorList>
            <person name="Heidelberg J."/>
        </authorList>
    </citation>
    <scope>NUCLEOTIDE SEQUENCE [LARGE SCALE GENOMIC DNA]</scope>
    <source>
        <strain>ATCC 39541 / Classical Ogawa 395 / O395</strain>
    </source>
</reference>
<reference key="2">
    <citation type="journal article" date="2008" name="PLoS ONE">
        <title>A recalibrated molecular clock and independent origins for the cholera pandemic clones.</title>
        <authorList>
            <person name="Feng L."/>
            <person name="Reeves P.R."/>
            <person name="Lan R."/>
            <person name="Ren Y."/>
            <person name="Gao C."/>
            <person name="Zhou Z."/>
            <person name="Ren Y."/>
            <person name="Cheng J."/>
            <person name="Wang W."/>
            <person name="Wang J."/>
            <person name="Qian W."/>
            <person name="Li D."/>
            <person name="Wang L."/>
        </authorList>
    </citation>
    <scope>NUCLEOTIDE SEQUENCE [LARGE SCALE GENOMIC DNA]</scope>
    <source>
        <strain>ATCC 39541 / Classical Ogawa 395 / O395</strain>
    </source>
</reference>
<comment type="catalytic activity">
    <reaction evidence="1">
        <text>D-serine = pyruvate + NH4(+)</text>
        <dbReference type="Rhea" id="RHEA:13977"/>
        <dbReference type="ChEBI" id="CHEBI:15361"/>
        <dbReference type="ChEBI" id="CHEBI:28938"/>
        <dbReference type="ChEBI" id="CHEBI:35247"/>
        <dbReference type="EC" id="4.3.1.18"/>
    </reaction>
</comment>
<comment type="cofactor">
    <cofactor evidence="1">
        <name>pyridoxal 5'-phosphate</name>
        <dbReference type="ChEBI" id="CHEBI:597326"/>
    </cofactor>
</comment>
<comment type="similarity">
    <text evidence="1">Belongs to the serine/threonine dehydratase family. DsdA subfamily.</text>
</comment>
<keyword id="KW-0456">Lyase</keyword>
<keyword id="KW-0663">Pyridoxal phosphate</keyword>
<sequence length="441" mass="48333">MMTINIEQLTEQYPLVKELIELKEVSWFNPSITRLEEGLSYVGLGSEDIQDASQRLKRFAPYLAKAFPETAKTNGIIESEVVPISEMQSVLEREYDTPIQGRLLLKKDSHLPISGSIKARGGIYEVLTHAEKLAIEAGLLTESDDYSKLLNEEFRDFFKRFSIAVGSTGNLGMSIGIMSAKLGFSVSVHMSADARAWKKNRLRALGVNVIEYAQDYGVAVAQGRKEAENDPTCFFIDDENSQTLFLGYSVAGERLKKQFDEKGIVVDAQHPLFVYLPCGVGGGPGGVAFGLKMAFGDNVHCIFAEPTHSPCMMLGVHTGLHDAISVQDIGIDNITAADGLAVGRASGFVGRAMERLLDGYLTISDERMYRLLGQLNEAENIQLEPSALAGMIGPIVVTKSVEYRARMQFDDTVMGNATHLVWATGGGMVPAEEMDSYLKNR</sequence>
<proteinExistence type="inferred from homology"/>
<name>SDHD_VIBC3</name>
<gene>
    <name evidence="1" type="primary">dsdA</name>
    <name type="ordered locus">VC0395_0362</name>
    <name type="ordered locus">VC395_A0899</name>
</gene>
<dbReference type="EC" id="4.3.1.18" evidence="1"/>
<dbReference type="EMBL" id="CP000626">
    <property type="protein sequence ID" value="ABQ18955.1"/>
    <property type="molecule type" value="Genomic_DNA"/>
</dbReference>
<dbReference type="EMBL" id="CP001236">
    <property type="protein sequence ID" value="ACP11731.1"/>
    <property type="molecule type" value="Genomic_DNA"/>
</dbReference>
<dbReference type="RefSeq" id="WP_001885353.1">
    <property type="nucleotide sequence ID" value="NZ_JAACZH010000012.1"/>
</dbReference>
<dbReference type="SMR" id="A5F0M6"/>
<dbReference type="KEGG" id="vco:VC0395_0362"/>
<dbReference type="KEGG" id="vcr:VC395_A0899"/>
<dbReference type="PATRIC" id="fig|345073.21.peg.3629"/>
<dbReference type="eggNOG" id="COG3048">
    <property type="taxonomic scope" value="Bacteria"/>
</dbReference>
<dbReference type="HOGENOM" id="CLU_035707_0_0_6"/>
<dbReference type="OrthoDB" id="9780546at2"/>
<dbReference type="Proteomes" id="UP000000249">
    <property type="component" value="Chromosome 1"/>
</dbReference>
<dbReference type="GO" id="GO:0008721">
    <property type="term" value="F:D-serine ammonia-lyase activity"/>
    <property type="evidence" value="ECO:0007669"/>
    <property type="project" value="UniProtKB-EC"/>
</dbReference>
<dbReference type="GO" id="GO:0016836">
    <property type="term" value="F:hydro-lyase activity"/>
    <property type="evidence" value="ECO:0007669"/>
    <property type="project" value="UniProtKB-UniRule"/>
</dbReference>
<dbReference type="GO" id="GO:0030170">
    <property type="term" value="F:pyridoxal phosphate binding"/>
    <property type="evidence" value="ECO:0007669"/>
    <property type="project" value="InterPro"/>
</dbReference>
<dbReference type="GO" id="GO:0036088">
    <property type="term" value="P:D-serine catabolic process"/>
    <property type="evidence" value="ECO:0007669"/>
    <property type="project" value="TreeGrafter"/>
</dbReference>
<dbReference type="GO" id="GO:0009097">
    <property type="term" value="P:isoleucine biosynthetic process"/>
    <property type="evidence" value="ECO:0007669"/>
    <property type="project" value="TreeGrafter"/>
</dbReference>
<dbReference type="CDD" id="cd06447">
    <property type="entry name" value="D-Ser-dehyd"/>
    <property type="match status" value="1"/>
</dbReference>
<dbReference type="FunFam" id="3.40.50.1100:FF:000018">
    <property type="entry name" value="D-serine dehydratase"/>
    <property type="match status" value="1"/>
</dbReference>
<dbReference type="Gene3D" id="3.40.50.1100">
    <property type="match status" value="2"/>
</dbReference>
<dbReference type="HAMAP" id="MF_01030">
    <property type="entry name" value="D_Ser_dehydrat"/>
    <property type="match status" value="1"/>
</dbReference>
<dbReference type="InterPro" id="IPR011780">
    <property type="entry name" value="D_Ser_am_lyase"/>
</dbReference>
<dbReference type="InterPro" id="IPR050147">
    <property type="entry name" value="Ser/Thr_Dehydratase"/>
</dbReference>
<dbReference type="InterPro" id="IPR000634">
    <property type="entry name" value="Ser/Thr_deHydtase_PyrdxlP-BS"/>
</dbReference>
<dbReference type="InterPro" id="IPR001926">
    <property type="entry name" value="TrpB-like_PALP"/>
</dbReference>
<dbReference type="InterPro" id="IPR036052">
    <property type="entry name" value="TrpB-like_PALP_sf"/>
</dbReference>
<dbReference type="NCBIfam" id="TIGR02035">
    <property type="entry name" value="D_Ser_am_lyase"/>
    <property type="match status" value="1"/>
</dbReference>
<dbReference type="NCBIfam" id="NF002823">
    <property type="entry name" value="PRK02991.1"/>
    <property type="match status" value="1"/>
</dbReference>
<dbReference type="PANTHER" id="PTHR48078:SF9">
    <property type="entry name" value="D-SERINE DEHYDRATASE"/>
    <property type="match status" value="1"/>
</dbReference>
<dbReference type="PANTHER" id="PTHR48078">
    <property type="entry name" value="THREONINE DEHYDRATASE, MITOCHONDRIAL-RELATED"/>
    <property type="match status" value="1"/>
</dbReference>
<dbReference type="Pfam" id="PF00291">
    <property type="entry name" value="PALP"/>
    <property type="match status" value="1"/>
</dbReference>
<dbReference type="SUPFAM" id="SSF53686">
    <property type="entry name" value="Tryptophan synthase beta subunit-like PLP-dependent enzymes"/>
    <property type="match status" value="1"/>
</dbReference>
<dbReference type="PROSITE" id="PS00165">
    <property type="entry name" value="DEHYDRATASE_SER_THR"/>
    <property type="match status" value="1"/>
</dbReference>
<accession>A5F0M6</accession>
<accession>C3M6G8</accession>
<protein>
    <recommendedName>
        <fullName evidence="1">Probable D-serine dehydratase</fullName>
        <ecNumber evidence="1">4.3.1.18</ecNumber>
    </recommendedName>
    <alternativeName>
        <fullName evidence="1">D-serine deaminase</fullName>
        <shortName evidence="1">DSD</shortName>
    </alternativeName>
</protein>